<protein>
    <recommendedName>
        <fullName evidence="1">Small ribosomal subunit protein bS16</fullName>
    </recommendedName>
    <alternativeName>
        <fullName evidence="2">30S ribosomal protein S16</fullName>
    </alternativeName>
</protein>
<keyword id="KW-1185">Reference proteome</keyword>
<keyword id="KW-0687">Ribonucleoprotein</keyword>
<keyword id="KW-0689">Ribosomal protein</keyword>
<proteinExistence type="inferred from homology"/>
<organism>
    <name type="scientific">Shigella boydii serotype 18 (strain CDC 3083-94 / BS512)</name>
    <dbReference type="NCBI Taxonomy" id="344609"/>
    <lineage>
        <taxon>Bacteria</taxon>
        <taxon>Pseudomonadati</taxon>
        <taxon>Pseudomonadota</taxon>
        <taxon>Gammaproteobacteria</taxon>
        <taxon>Enterobacterales</taxon>
        <taxon>Enterobacteriaceae</taxon>
        <taxon>Shigella</taxon>
    </lineage>
</organism>
<gene>
    <name evidence="1" type="primary">rpsP</name>
    <name type="ordered locus">SbBS512_E2998</name>
</gene>
<sequence>MVTIRLARHGAKKRPFYQVVVADSRNARNGRFIERVGFFNPIASEKEEGTRLDLDRIAHWVGQGATISDRVAALIKEVNKAA</sequence>
<comment type="similarity">
    <text evidence="1">Belongs to the bacterial ribosomal protein bS16 family.</text>
</comment>
<feature type="chain" id="PRO_1000196474" description="Small ribosomal subunit protein bS16">
    <location>
        <begin position="1"/>
        <end position="82"/>
    </location>
</feature>
<evidence type="ECO:0000255" key="1">
    <source>
        <dbReference type="HAMAP-Rule" id="MF_00385"/>
    </source>
</evidence>
<evidence type="ECO:0000305" key="2"/>
<reference key="1">
    <citation type="submission" date="2008-05" db="EMBL/GenBank/DDBJ databases">
        <title>Complete sequence of Shigella boydii serotype 18 strain BS512.</title>
        <authorList>
            <person name="Rasko D.A."/>
            <person name="Rosovitz M."/>
            <person name="Maurelli A.T."/>
            <person name="Myers G."/>
            <person name="Seshadri R."/>
            <person name="Cer R."/>
            <person name="Jiang L."/>
            <person name="Ravel J."/>
            <person name="Sebastian Y."/>
        </authorList>
    </citation>
    <scope>NUCLEOTIDE SEQUENCE [LARGE SCALE GENOMIC DNA]</scope>
    <source>
        <strain>CDC 3083-94 / BS512</strain>
    </source>
</reference>
<dbReference type="EMBL" id="CP001063">
    <property type="protein sequence ID" value="ACD07671.1"/>
    <property type="molecule type" value="Genomic_DNA"/>
</dbReference>
<dbReference type="RefSeq" id="WP_000256450.1">
    <property type="nucleotide sequence ID" value="NC_010658.1"/>
</dbReference>
<dbReference type="SMR" id="B2TYN1"/>
<dbReference type="STRING" id="344609.SbBS512_E2998"/>
<dbReference type="GeneID" id="93774459"/>
<dbReference type="KEGG" id="sbc:SbBS512_E2998"/>
<dbReference type="HOGENOM" id="CLU_100590_5_1_6"/>
<dbReference type="Proteomes" id="UP000001030">
    <property type="component" value="Chromosome"/>
</dbReference>
<dbReference type="GO" id="GO:0005737">
    <property type="term" value="C:cytoplasm"/>
    <property type="evidence" value="ECO:0007669"/>
    <property type="project" value="UniProtKB-ARBA"/>
</dbReference>
<dbReference type="GO" id="GO:0015935">
    <property type="term" value="C:small ribosomal subunit"/>
    <property type="evidence" value="ECO:0007669"/>
    <property type="project" value="TreeGrafter"/>
</dbReference>
<dbReference type="GO" id="GO:0003735">
    <property type="term" value="F:structural constituent of ribosome"/>
    <property type="evidence" value="ECO:0007669"/>
    <property type="project" value="InterPro"/>
</dbReference>
<dbReference type="GO" id="GO:0006412">
    <property type="term" value="P:translation"/>
    <property type="evidence" value="ECO:0007669"/>
    <property type="project" value="UniProtKB-UniRule"/>
</dbReference>
<dbReference type="FunFam" id="3.30.1320.10:FF:000001">
    <property type="entry name" value="30S ribosomal protein S16"/>
    <property type="match status" value="1"/>
</dbReference>
<dbReference type="Gene3D" id="3.30.1320.10">
    <property type="match status" value="1"/>
</dbReference>
<dbReference type="HAMAP" id="MF_00385">
    <property type="entry name" value="Ribosomal_bS16"/>
    <property type="match status" value="1"/>
</dbReference>
<dbReference type="InterPro" id="IPR000307">
    <property type="entry name" value="Ribosomal_bS16"/>
</dbReference>
<dbReference type="InterPro" id="IPR020592">
    <property type="entry name" value="Ribosomal_bS16_CS"/>
</dbReference>
<dbReference type="InterPro" id="IPR023803">
    <property type="entry name" value="Ribosomal_bS16_dom_sf"/>
</dbReference>
<dbReference type="NCBIfam" id="TIGR00002">
    <property type="entry name" value="S16"/>
    <property type="match status" value="1"/>
</dbReference>
<dbReference type="PANTHER" id="PTHR12919">
    <property type="entry name" value="30S RIBOSOMAL PROTEIN S16"/>
    <property type="match status" value="1"/>
</dbReference>
<dbReference type="PANTHER" id="PTHR12919:SF20">
    <property type="entry name" value="SMALL RIBOSOMAL SUBUNIT PROTEIN BS16M"/>
    <property type="match status" value="1"/>
</dbReference>
<dbReference type="Pfam" id="PF00886">
    <property type="entry name" value="Ribosomal_S16"/>
    <property type="match status" value="1"/>
</dbReference>
<dbReference type="SUPFAM" id="SSF54565">
    <property type="entry name" value="Ribosomal protein S16"/>
    <property type="match status" value="1"/>
</dbReference>
<dbReference type="PROSITE" id="PS00732">
    <property type="entry name" value="RIBOSOMAL_S16"/>
    <property type="match status" value="1"/>
</dbReference>
<accession>B2TYN1</accession>
<name>RS16_SHIB3</name>